<gene>
    <name evidence="1" type="primary">rps6e</name>
    <name type="ordered locus">Saci_0831</name>
</gene>
<evidence type="ECO:0000255" key="1">
    <source>
        <dbReference type="HAMAP-Rule" id="MF_00512"/>
    </source>
</evidence>
<evidence type="ECO:0000305" key="2"/>
<feature type="chain" id="PRO_0000137360" description="Small ribosomal subunit protein eS6">
    <location>
        <begin position="1"/>
        <end position="213"/>
    </location>
</feature>
<name>RS6E_SULAC</name>
<sequence length="213" mass="23703">MPDFKIVVSDPKTKEDKKEKLKVKVSDKVKSNQGEKEGKAIPLARINDKIKQALNLDDFLTLEITKQEGDKKVKIKGHFKIEVDNTVPDGEVWISKSMAEKFGAEEFEALAYRTRAFQLSLDQSKLPNLVGTKIGDVIDINVSGVNLKLKITGGSDNSGFSMRFDVGGGAKRKILVSGPPGYYPKEDGLRRKRTVRGNMITPEIVQINTIMIR</sequence>
<comment type="similarity">
    <text evidence="1">Belongs to the eukaryotic ribosomal protein eS6 family.</text>
</comment>
<accession>Q4JAI1</accession>
<proteinExistence type="evidence at protein level"/>
<dbReference type="EMBL" id="CP000077">
    <property type="protein sequence ID" value="AAY80198.1"/>
    <property type="molecule type" value="Genomic_DNA"/>
</dbReference>
<dbReference type="RefSeq" id="WP_011277700.1">
    <property type="nucleotide sequence ID" value="NC_007181.1"/>
</dbReference>
<dbReference type="PDB" id="8HKX">
    <property type="method" value="EM"/>
    <property type="resolution" value="3.14 A"/>
    <property type="chains" value="AS6E=109-213"/>
</dbReference>
<dbReference type="PDB" id="8HKY">
    <property type="method" value="EM"/>
    <property type="resolution" value="4.45 A"/>
    <property type="chains" value="AS6E=109-213"/>
</dbReference>
<dbReference type="PDB" id="8HKZ">
    <property type="method" value="EM"/>
    <property type="resolution" value="4.78 A"/>
    <property type="chains" value="AS6E=109-213"/>
</dbReference>
<dbReference type="PDB" id="8HL1">
    <property type="method" value="EM"/>
    <property type="resolution" value="3.93 A"/>
    <property type="chains" value="AS6E=109-213"/>
</dbReference>
<dbReference type="PDB" id="8HL2">
    <property type="method" value="EM"/>
    <property type="resolution" value="4.10 A"/>
    <property type="chains" value="AS6E=109-213"/>
</dbReference>
<dbReference type="PDB" id="8HL3">
    <property type="method" value="EM"/>
    <property type="resolution" value="4.80 A"/>
    <property type="chains" value="AS6E=109-213"/>
</dbReference>
<dbReference type="PDB" id="8HL4">
    <property type="method" value="EM"/>
    <property type="resolution" value="4.62 A"/>
    <property type="chains" value="AS6E=109-213"/>
</dbReference>
<dbReference type="PDB" id="8HL5">
    <property type="method" value="EM"/>
    <property type="resolution" value="5.72 A"/>
    <property type="chains" value="AS6E=109-213"/>
</dbReference>
<dbReference type="PDB" id="8WKP">
    <property type="method" value="EM"/>
    <property type="resolution" value="4.62 A"/>
    <property type="chains" value="AS6E=109-213"/>
</dbReference>
<dbReference type="PDB" id="8WQ2">
    <property type="method" value="EM"/>
    <property type="resolution" value="4.10 A"/>
    <property type="chains" value="AS6E=109-213"/>
</dbReference>
<dbReference type="PDB" id="8WQ4">
    <property type="method" value="EM"/>
    <property type="resolution" value="4.53 A"/>
    <property type="chains" value="AS6E=109-213"/>
</dbReference>
<dbReference type="PDBsum" id="8HKX"/>
<dbReference type="PDBsum" id="8HKY"/>
<dbReference type="PDBsum" id="8HKZ"/>
<dbReference type="PDBsum" id="8HL1"/>
<dbReference type="PDBsum" id="8HL2"/>
<dbReference type="PDBsum" id="8HL3"/>
<dbReference type="PDBsum" id="8HL4"/>
<dbReference type="PDBsum" id="8HL5"/>
<dbReference type="PDBsum" id="8WKP"/>
<dbReference type="PDBsum" id="8WQ2"/>
<dbReference type="PDBsum" id="8WQ4"/>
<dbReference type="EMDB" id="EMD-34862"/>
<dbReference type="EMDB" id="EMD-34863"/>
<dbReference type="EMDB" id="EMD-34864"/>
<dbReference type="EMDB" id="EMD-34866"/>
<dbReference type="EMDB" id="EMD-34867"/>
<dbReference type="EMDB" id="EMD-34868"/>
<dbReference type="EMDB" id="EMD-34869"/>
<dbReference type="EMDB" id="EMD-34870"/>
<dbReference type="EMDB" id="EMD-37604"/>
<dbReference type="EMDB" id="EMD-37733"/>
<dbReference type="EMDB" id="EMD-37734"/>
<dbReference type="SMR" id="Q4JAI1"/>
<dbReference type="STRING" id="330779.Saci_0831"/>
<dbReference type="GeneID" id="14551344"/>
<dbReference type="KEGG" id="sai:Saci_0831"/>
<dbReference type="PATRIC" id="fig|330779.12.peg.795"/>
<dbReference type="eggNOG" id="arCOG01946">
    <property type="taxonomic scope" value="Archaea"/>
</dbReference>
<dbReference type="HOGENOM" id="CLU_1275302_0_0_2"/>
<dbReference type="Proteomes" id="UP000001018">
    <property type="component" value="Chromosome"/>
</dbReference>
<dbReference type="GO" id="GO:1990904">
    <property type="term" value="C:ribonucleoprotein complex"/>
    <property type="evidence" value="ECO:0007669"/>
    <property type="project" value="UniProtKB-KW"/>
</dbReference>
<dbReference type="GO" id="GO:0005840">
    <property type="term" value="C:ribosome"/>
    <property type="evidence" value="ECO:0007669"/>
    <property type="project" value="UniProtKB-KW"/>
</dbReference>
<dbReference type="GO" id="GO:0003735">
    <property type="term" value="F:structural constituent of ribosome"/>
    <property type="evidence" value="ECO:0007669"/>
    <property type="project" value="InterPro"/>
</dbReference>
<dbReference type="GO" id="GO:0006412">
    <property type="term" value="P:translation"/>
    <property type="evidence" value="ECO:0007669"/>
    <property type="project" value="UniProtKB-UniRule"/>
</dbReference>
<dbReference type="HAMAP" id="MF_00512">
    <property type="entry name" value="Ribosomal_eS6"/>
    <property type="match status" value="1"/>
</dbReference>
<dbReference type="InterPro" id="IPR001377">
    <property type="entry name" value="Ribosomal_eS6"/>
</dbReference>
<dbReference type="InterPro" id="IPR020924">
    <property type="entry name" value="Ribosomal_eS6_arc"/>
</dbReference>
<dbReference type="NCBIfam" id="NF003292">
    <property type="entry name" value="PRK04290.1-1"/>
    <property type="match status" value="1"/>
</dbReference>
<dbReference type="PANTHER" id="PTHR11502">
    <property type="entry name" value="40S RIBOSOMAL PROTEIN S6"/>
    <property type="match status" value="1"/>
</dbReference>
<dbReference type="Pfam" id="PF01092">
    <property type="entry name" value="Ribosomal_S6e"/>
    <property type="match status" value="1"/>
</dbReference>
<dbReference type="SMART" id="SM01405">
    <property type="entry name" value="Ribosomal_S6e"/>
    <property type="match status" value="1"/>
</dbReference>
<reference key="1">
    <citation type="journal article" date="2005" name="J. Bacteriol.">
        <title>The genome of Sulfolobus acidocaldarius, a model organism of the Crenarchaeota.</title>
        <authorList>
            <person name="Chen L."/>
            <person name="Bruegger K."/>
            <person name="Skovgaard M."/>
            <person name="Redder P."/>
            <person name="She Q."/>
            <person name="Torarinsson E."/>
            <person name="Greve B."/>
            <person name="Awayez M."/>
            <person name="Zibat A."/>
            <person name="Klenk H.-P."/>
            <person name="Garrett R.A."/>
        </authorList>
    </citation>
    <scope>NUCLEOTIDE SEQUENCE [LARGE SCALE GENOMIC DNA]</scope>
    <source>
        <strain>ATCC 33909 / DSM 639 / JCM 8929 / NBRC 15157 / NCIMB 11770</strain>
    </source>
</reference>
<keyword id="KW-0002">3D-structure</keyword>
<keyword id="KW-1185">Reference proteome</keyword>
<keyword id="KW-0687">Ribonucleoprotein</keyword>
<keyword id="KW-0689">Ribosomal protein</keyword>
<protein>
    <recommendedName>
        <fullName evidence="1">Small ribosomal subunit protein eS6</fullName>
    </recommendedName>
    <alternativeName>
        <fullName evidence="2">30S ribosomal protein S6e</fullName>
    </alternativeName>
</protein>
<organism>
    <name type="scientific">Sulfolobus acidocaldarius (strain ATCC 33909 / DSM 639 / JCM 8929 / NBRC 15157 / NCIMB 11770)</name>
    <dbReference type="NCBI Taxonomy" id="330779"/>
    <lineage>
        <taxon>Archaea</taxon>
        <taxon>Thermoproteota</taxon>
        <taxon>Thermoprotei</taxon>
        <taxon>Sulfolobales</taxon>
        <taxon>Sulfolobaceae</taxon>
        <taxon>Sulfolobus</taxon>
    </lineage>
</organism>